<protein>
    <recommendedName>
        <fullName>Peptidyl-prolyl cis-trans isomerase Mip</fullName>
        <shortName>PPIase</shortName>
        <ecNumber>5.2.1.8</ecNumber>
    </recommendedName>
    <alternativeName>
        <fullName>Macrophage infectivity potentiator</fullName>
    </alternativeName>
    <alternativeName>
        <fullName>Rotamase</fullName>
    </alternativeName>
</protein>
<reference key="1">
    <citation type="journal article" date="1995" name="Microbiology">
        <title>Molecular cloning of a Coxiella burnetii gene encoding a macrophage infectivity potentiator (Mip) analogue.</title>
        <authorList>
            <person name="Mo Y.-Y."/>
            <person name="Cianciotto N.P."/>
            <person name="Mallavia L.P."/>
        </authorList>
    </citation>
    <scope>NUCLEOTIDE SEQUENCE [GENOMIC DNA]</scope>
    <scope>PROTEIN SEQUENCE OF 22-28</scope>
    <source>
        <strain>Nine Mile phase I</strain>
    </source>
</reference>
<reference key="2">
    <citation type="journal article" date="2003" name="Proc. Natl. Acad. Sci. U.S.A.">
        <title>Complete genome sequence of the Q-fever pathogen, Coxiella burnetii.</title>
        <authorList>
            <person name="Seshadri R."/>
            <person name="Paulsen I.T."/>
            <person name="Eisen J.A."/>
            <person name="Read T.D."/>
            <person name="Nelson K.E."/>
            <person name="Nelson W.C."/>
            <person name="Ward N.L."/>
            <person name="Tettelin H."/>
            <person name="Davidsen T.M."/>
            <person name="Beanan M.J."/>
            <person name="DeBoy R.T."/>
            <person name="Daugherty S.C."/>
            <person name="Brinkac L.M."/>
            <person name="Madupu R."/>
            <person name="Dodson R.J."/>
            <person name="Khouri H.M."/>
            <person name="Lee K.H."/>
            <person name="Carty H.A."/>
            <person name="Scanlan D."/>
            <person name="Heinzen R.A."/>
            <person name="Thompson H.A."/>
            <person name="Samuel J.E."/>
            <person name="Fraser C.M."/>
            <person name="Heidelberg J.F."/>
        </authorList>
    </citation>
    <scope>NUCLEOTIDE SEQUENCE [LARGE SCALE GENOMIC DNA]</scope>
    <source>
        <strain>RSA 493 / Nine Mile phase I</strain>
    </source>
</reference>
<dbReference type="EC" id="5.2.1.8"/>
<dbReference type="EMBL" id="U14170">
    <property type="protein sequence ID" value="AAA92352.1"/>
    <property type="molecule type" value="Genomic_DNA"/>
</dbReference>
<dbReference type="EMBL" id="AE016828">
    <property type="protein sequence ID" value="AAO90174.1"/>
    <property type="molecule type" value="Genomic_DNA"/>
</dbReference>
<dbReference type="RefSeq" id="WP_010957701.1">
    <property type="nucleotide sequence ID" value="NC_002971.4"/>
</dbReference>
<dbReference type="SMR" id="P51752"/>
<dbReference type="STRING" id="227377.CBU_0630"/>
<dbReference type="EnsemblBacteria" id="AAO90174">
    <property type="protein sequence ID" value="AAO90174"/>
    <property type="gene ID" value="CBU_0630"/>
</dbReference>
<dbReference type="KEGG" id="cbu:CBU_0630"/>
<dbReference type="PATRIC" id="fig|227377.7.peg.615"/>
<dbReference type="eggNOG" id="COG0545">
    <property type="taxonomic scope" value="Bacteria"/>
</dbReference>
<dbReference type="HOGENOM" id="CLU_013615_0_1_6"/>
<dbReference type="OrthoDB" id="9814548at2"/>
<dbReference type="Proteomes" id="UP000002671">
    <property type="component" value="Chromosome"/>
</dbReference>
<dbReference type="GO" id="GO:0005576">
    <property type="term" value="C:extracellular region"/>
    <property type="evidence" value="ECO:0007669"/>
    <property type="project" value="UniProtKB-SubCell"/>
</dbReference>
<dbReference type="GO" id="GO:0016020">
    <property type="term" value="C:membrane"/>
    <property type="evidence" value="ECO:0007669"/>
    <property type="project" value="InterPro"/>
</dbReference>
<dbReference type="GO" id="GO:0003755">
    <property type="term" value="F:peptidyl-prolyl cis-trans isomerase activity"/>
    <property type="evidence" value="ECO:0000318"/>
    <property type="project" value="GO_Central"/>
</dbReference>
<dbReference type="GO" id="GO:0006457">
    <property type="term" value="P:protein folding"/>
    <property type="evidence" value="ECO:0007669"/>
    <property type="project" value="InterPro"/>
</dbReference>
<dbReference type="FunFam" id="3.10.50.40:FF:000006">
    <property type="entry name" value="Peptidyl-prolyl cis-trans isomerase"/>
    <property type="match status" value="1"/>
</dbReference>
<dbReference type="Gene3D" id="3.10.50.40">
    <property type="match status" value="1"/>
</dbReference>
<dbReference type="Gene3D" id="1.10.287.460">
    <property type="entry name" value="Peptidyl-prolyl cis-trans isomerase, FKBP-type, N-terminal domain"/>
    <property type="match status" value="1"/>
</dbReference>
<dbReference type="InterPro" id="IPR008104">
    <property type="entry name" value="INFPOTNTIATR"/>
</dbReference>
<dbReference type="InterPro" id="IPR046357">
    <property type="entry name" value="PPIase_dom_sf"/>
</dbReference>
<dbReference type="InterPro" id="IPR001179">
    <property type="entry name" value="PPIase_FKBP_dom"/>
</dbReference>
<dbReference type="InterPro" id="IPR000774">
    <property type="entry name" value="PPIase_FKBP_N"/>
</dbReference>
<dbReference type="InterPro" id="IPR036944">
    <property type="entry name" value="PPIase_FKBP_N_sf"/>
</dbReference>
<dbReference type="PANTHER" id="PTHR43811">
    <property type="entry name" value="FKBP-TYPE PEPTIDYL-PROLYL CIS-TRANS ISOMERASE FKPA"/>
    <property type="match status" value="1"/>
</dbReference>
<dbReference type="PANTHER" id="PTHR43811:SF57">
    <property type="entry name" value="FKBP-TYPE PEPTIDYL-PROLYL CIS-TRANS ISOMERASE FKPA-RELATED"/>
    <property type="match status" value="1"/>
</dbReference>
<dbReference type="Pfam" id="PF00254">
    <property type="entry name" value="FKBP_C"/>
    <property type="match status" value="1"/>
</dbReference>
<dbReference type="Pfam" id="PF01346">
    <property type="entry name" value="FKBP_N"/>
    <property type="match status" value="1"/>
</dbReference>
<dbReference type="PRINTS" id="PR01730">
    <property type="entry name" value="INFPOTNTIATR"/>
</dbReference>
<dbReference type="SUPFAM" id="SSF54534">
    <property type="entry name" value="FKBP-like"/>
    <property type="match status" value="1"/>
</dbReference>
<dbReference type="PROSITE" id="PS50059">
    <property type="entry name" value="FKBP_PPIASE"/>
    <property type="match status" value="1"/>
</dbReference>
<comment type="function">
    <text>May be an essential virulence factor associated with macrophage infectivity. Exhibits PPIase activity.</text>
</comment>
<comment type="catalytic activity">
    <reaction>
        <text>[protein]-peptidylproline (omega=180) = [protein]-peptidylproline (omega=0)</text>
        <dbReference type="Rhea" id="RHEA:16237"/>
        <dbReference type="Rhea" id="RHEA-COMP:10747"/>
        <dbReference type="Rhea" id="RHEA-COMP:10748"/>
        <dbReference type="ChEBI" id="CHEBI:83833"/>
        <dbReference type="ChEBI" id="CHEBI:83834"/>
        <dbReference type="EC" id="5.2.1.8"/>
    </reaction>
</comment>
<comment type="subcellular location">
    <subcellularLocation>
        <location evidence="3">Secreted</location>
    </subcellularLocation>
</comment>
<comment type="similarity">
    <text evidence="3">Belongs to the FKBP-type PPIase family.</text>
</comment>
<feature type="signal peptide" evidence="2">
    <location>
        <begin position="1"/>
        <end position="21"/>
    </location>
</feature>
<feature type="chain" id="PRO_0000025530" description="Peptidyl-prolyl cis-trans isomerase Mip">
    <location>
        <begin position="22"/>
        <end position="230"/>
    </location>
</feature>
<feature type="domain" description="PPIase FKBP-type" evidence="1">
    <location>
        <begin position="142"/>
        <end position="230"/>
    </location>
</feature>
<feature type="sequence conflict" description="In Ref. 1; AAA92352." evidence="3" ref="1">
    <original>Q</original>
    <variation>N</variation>
    <location>
        <position position="167"/>
    </location>
</feature>
<proteinExistence type="evidence at protein level"/>
<keyword id="KW-0903">Direct protein sequencing</keyword>
<keyword id="KW-0413">Isomerase</keyword>
<keyword id="KW-1185">Reference proteome</keyword>
<keyword id="KW-0697">Rotamase</keyword>
<keyword id="KW-0964">Secreted</keyword>
<keyword id="KW-0732">Signal</keyword>
<keyword id="KW-0843">Virulence</keyword>
<gene>
    <name type="primary">mip</name>
    <name type="ordered locus">CBU_0630</name>
</gene>
<accession>P51752</accession>
<evidence type="ECO:0000255" key="1">
    <source>
        <dbReference type="PROSITE-ProRule" id="PRU00277"/>
    </source>
</evidence>
<evidence type="ECO:0000269" key="2">
    <source>
    </source>
</evidence>
<evidence type="ECO:0000305" key="3"/>
<organism>
    <name type="scientific">Coxiella burnetii (strain RSA 493 / Nine Mile phase I)</name>
    <dbReference type="NCBI Taxonomy" id="227377"/>
    <lineage>
        <taxon>Bacteria</taxon>
        <taxon>Pseudomonadati</taxon>
        <taxon>Pseudomonadota</taxon>
        <taxon>Gammaproteobacteria</taxon>
        <taxon>Legionellales</taxon>
        <taxon>Coxiellaceae</taxon>
        <taxon>Coxiella</taxon>
    </lineage>
</organism>
<sequence length="230" mass="25518">MKRLILPFLSVGLLLGTTAHAATPLKTEQDKLSYSMGVMTGKAFRKHDIKIDPQTFSMGLSDAYLGKETQMTEAEMRQTLQQFEKQSLQKMQHKMKQTAQQNAEKSRAFLTANKNKPGVKTLANGLQYKVLQAGQGQSPTLNDEVTVNYEGRLINGTVFDSSYKRGQPATFPLKSVIKGWQEALTRMKPGAIWEIYVPPQLAYGEQGAPGVIGPNEALIFKVNLISVKKK</sequence>
<name>MIP_COXBU</name>